<comment type="catalytic activity">
    <reaction evidence="1">
        <text>urea + 2 H2O + H(+) = hydrogencarbonate + 2 NH4(+)</text>
        <dbReference type="Rhea" id="RHEA:20557"/>
        <dbReference type="ChEBI" id="CHEBI:15377"/>
        <dbReference type="ChEBI" id="CHEBI:15378"/>
        <dbReference type="ChEBI" id="CHEBI:16199"/>
        <dbReference type="ChEBI" id="CHEBI:17544"/>
        <dbReference type="ChEBI" id="CHEBI:28938"/>
        <dbReference type="EC" id="3.5.1.5"/>
    </reaction>
</comment>
<comment type="pathway">
    <text evidence="1">Nitrogen metabolism; urea degradation; CO(2) and NH(3) from urea (urease route): step 1/1.</text>
</comment>
<comment type="subunit">
    <text evidence="1">Heterotrimer of UreA (gamma), UreB (beta) and UreC (alpha) subunits. Three heterotrimers associate to form the active enzyme.</text>
</comment>
<comment type="subcellular location">
    <subcellularLocation>
        <location evidence="1">Cytoplasm</location>
    </subcellularLocation>
</comment>
<comment type="similarity">
    <text evidence="1">Belongs to the urease gamma subunit family.</text>
</comment>
<proteinExistence type="inferred from homology"/>
<evidence type="ECO:0000255" key="1">
    <source>
        <dbReference type="HAMAP-Rule" id="MF_00739"/>
    </source>
</evidence>
<sequence length="100" mass="11062">MELTPREKDKLLIFTAALLAERRRARGLKLNYPETVALITAALMEGARDGKTVAELMSEGTRILGRDEIMEGVPEMISNIQVEVTFPDGTKLITVHNPVV</sequence>
<keyword id="KW-0963">Cytoplasm</keyword>
<keyword id="KW-0378">Hydrolase</keyword>
<keyword id="KW-1185">Reference proteome</keyword>
<name>URE3_BORPE</name>
<gene>
    <name evidence="1" type="primary">ureA</name>
    <name type="ordered locus">BP3171</name>
</gene>
<feature type="chain" id="PRO_0000097996" description="Urease subunit gamma">
    <location>
        <begin position="1"/>
        <end position="100"/>
    </location>
</feature>
<organism>
    <name type="scientific">Bordetella pertussis (strain Tohama I / ATCC BAA-589 / NCTC 13251)</name>
    <dbReference type="NCBI Taxonomy" id="257313"/>
    <lineage>
        <taxon>Bacteria</taxon>
        <taxon>Pseudomonadati</taxon>
        <taxon>Pseudomonadota</taxon>
        <taxon>Betaproteobacteria</taxon>
        <taxon>Burkholderiales</taxon>
        <taxon>Alcaligenaceae</taxon>
        <taxon>Bordetella</taxon>
    </lineage>
</organism>
<accession>Q7VUD0</accession>
<dbReference type="EC" id="3.5.1.5" evidence="1"/>
<dbReference type="EMBL" id="BX640420">
    <property type="protein sequence ID" value="CAE43439.1"/>
    <property type="molecule type" value="Genomic_DNA"/>
</dbReference>
<dbReference type="RefSeq" id="NP_881733.1">
    <property type="nucleotide sequence ID" value="NC_002929.2"/>
</dbReference>
<dbReference type="RefSeq" id="WP_010931340.1">
    <property type="nucleotide sequence ID" value="NZ_CP039022.1"/>
</dbReference>
<dbReference type="SMR" id="Q7VUD0"/>
<dbReference type="STRING" id="257313.BP3171"/>
<dbReference type="PaxDb" id="257313-BP3171"/>
<dbReference type="KEGG" id="bpe:BP3171"/>
<dbReference type="PATRIC" id="fig|257313.5.peg.3428"/>
<dbReference type="eggNOG" id="COG0831">
    <property type="taxonomic scope" value="Bacteria"/>
</dbReference>
<dbReference type="HOGENOM" id="CLU_145825_1_0_4"/>
<dbReference type="UniPathway" id="UPA00258">
    <property type="reaction ID" value="UER00370"/>
</dbReference>
<dbReference type="Proteomes" id="UP000002676">
    <property type="component" value="Chromosome"/>
</dbReference>
<dbReference type="GO" id="GO:0005737">
    <property type="term" value="C:cytoplasm"/>
    <property type="evidence" value="ECO:0007669"/>
    <property type="project" value="UniProtKB-SubCell"/>
</dbReference>
<dbReference type="GO" id="GO:0016151">
    <property type="term" value="F:nickel cation binding"/>
    <property type="evidence" value="ECO:0007669"/>
    <property type="project" value="InterPro"/>
</dbReference>
<dbReference type="GO" id="GO:0009039">
    <property type="term" value="F:urease activity"/>
    <property type="evidence" value="ECO:0007669"/>
    <property type="project" value="UniProtKB-UniRule"/>
</dbReference>
<dbReference type="GO" id="GO:0043419">
    <property type="term" value="P:urea catabolic process"/>
    <property type="evidence" value="ECO:0007669"/>
    <property type="project" value="UniProtKB-UniRule"/>
</dbReference>
<dbReference type="CDD" id="cd00390">
    <property type="entry name" value="Urease_gamma"/>
    <property type="match status" value="1"/>
</dbReference>
<dbReference type="Gene3D" id="3.30.280.10">
    <property type="entry name" value="Urease, gamma-like subunit"/>
    <property type="match status" value="1"/>
</dbReference>
<dbReference type="HAMAP" id="MF_00739">
    <property type="entry name" value="Urease_gamma"/>
    <property type="match status" value="1"/>
</dbReference>
<dbReference type="InterPro" id="IPR012010">
    <property type="entry name" value="Urease_gamma"/>
</dbReference>
<dbReference type="InterPro" id="IPR002026">
    <property type="entry name" value="Urease_gamma/gamma-beta_su"/>
</dbReference>
<dbReference type="InterPro" id="IPR036463">
    <property type="entry name" value="Urease_gamma_sf"/>
</dbReference>
<dbReference type="InterPro" id="IPR050069">
    <property type="entry name" value="Urease_subunit"/>
</dbReference>
<dbReference type="NCBIfam" id="NF009712">
    <property type="entry name" value="PRK13241.1"/>
    <property type="match status" value="1"/>
</dbReference>
<dbReference type="NCBIfam" id="TIGR00193">
    <property type="entry name" value="urease_gam"/>
    <property type="match status" value="1"/>
</dbReference>
<dbReference type="PANTHER" id="PTHR33569">
    <property type="entry name" value="UREASE"/>
    <property type="match status" value="1"/>
</dbReference>
<dbReference type="PANTHER" id="PTHR33569:SF1">
    <property type="entry name" value="UREASE"/>
    <property type="match status" value="1"/>
</dbReference>
<dbReference type="Pfam" id="PF00547">
    <property type="entry name" value="Urease_gamma"/>
    <property type="match status" value="1"/>
</dbReference>
<dbReference type="PIRSF" id="PIRSF001223">
    <property type="entry name" value="Urease_gamma"/>
    <property type="match status" value="1"/>
</dbReference>
<dbReference type="SUPFAM" id="SSF54111">
    <property type="entry name" value="Urease, gamma-subunit"/>
    <property type="match status" value="1"/>
</dbReference>
<reference key="1">
    <citation type="journal article" date="2003" name="Nat. Genet.">
        <title>Comparative analysis of the genome sequences of Bordetella pertussis, Bordetella parapertussis and Bordetella bronchiseptica.</title>
        <authorList>
            <person name="Parkhill J."/>
            <person name="Sebaihia M."/>
            <person name="Preston A."/>
            <person name="Murphy L.D."/>
            <person name="Thomson N.R."/>
            <person name="Harris D.E."/>
            <person name="Holden M.T.G."/>
            <person name="Churcher C.M."/>
            <person name="Bentley S.D."/>
            <person name="Mungall K.L."/>
            <person name="Cerdeno-Tarraga A.-M."/>
            <person name="Temple L."/>
            <person name="James K.D."/>
            <person name="Harris B."/>
            <person name="Quail M.A."/>
            <person name="Achtman M."/>
            <person name="Atkin R."/>
            <person name="Baker S."/>
            <person name="Basham D."/>
            <person name="Bason N."/>
            <person name="Cherevach I."/>
            <person name="Chillingworth T."/>
            <person name="Collins M."/>
            <person name="Cronin A."/>
            <person name="Davis P."/>
            <person name="Doggett J."/>
            <person name="Feltwell T."/>
            <person name="Goble A."/>
            <person name="Hamlin N."/>
            <person name="Hauser H."/>
            <person name="Holroyd S."/>
            <person name="Jagels K."/>
            <person name="Leather S."/>
            <person name="Moule S."/>
            <person name="Norberczak H."/>
            <person name="O'Neil S."/>
            <person name="Ormond D."/>
            <person name="Price C."/>
            <person name="Rabbinowitsch E."/>
            <person name="Rutter S."/>
            <person name="Sanders M."/>
            <person name="Saunders D."/>
            <person name="Seeger K."/>
            <person name="Sharp S."/>
            <person name="Simmonds M."/>
            <person name="Skelton J."/>
            <person name="Squares R."/>
            <person name="Squares S."/>
            <person name="Stevens K."/>
            <person name="Unwin L."/>
            <person name="Whitehead S."/>
            <person name="Barrell B.G."/>
            <person name="Maskell D.J."/>
        </authorList>
    </citation>
    <scope>NUCLEOTIDE SEQUENCE [LARGE SCALE GENOMIC DNA]</scope>
    <source>
        <strain>Tohama I / ATCC BAA-589 / NCTC 13251</strain>
    </source>
</reference>
<protein>
    <recommendedName>
        <fullName evidence="1">Urease subunit gamma</fullName>
        <ecNumber evidence="1">3.5.1.5</ecNumber>
    </recommendedName>
    <alternativeName>
        <fullName evidence="1">Urea amidohydrolase subunit gamma</fullName>
    </alternativeName>
</protein>